<comment type="function">
    <text evidence="1">Probably acts as a transcriptional activator. Binds to the GCC-box pathogenesis-related promoter element. May be involved in the regulation of gene expression by stress factors and by components of stress signal transduction pathways (By similarity).</text>
</comment>
<comment type="subcellular location">
    <subcellularLocation>
        <location evidence="4">Nucleus</location>
    </subcellularLocation>
</comment>
<comment type="similarity">
    <text evidence="4">Belongs to the AP2/ERF transcription factor family. ERF subfamily.</text>
</comment>
<feature type="chain" id="PRO_0000290399" description="Ethylene-responsive transcription factor ERF061">
    <location>
        <begin position="1"/>
        <end position="335"/>
    </location>
</feature>
<feature type="DNA-binding region" description="AP2/ERF" evidence="2">
    <location>
        <begin position="135"/>
        <end position="192"/>
    </location>
</feature>
<feature type="region of interest" description="Disordered" evidence="3">
    <location>
        <begin position="244"/>
        <end position="264"/>
    </location>
</feature>
<gene>
    <name type="primary">ERF061</name>
    <name type="ordered locus">At1g64380</name>
    <name type="ORF">F15H21.12</name>
</gene>
<protein>
    <recommendedName>
        <fullName>Ethylene-responsive transcription factor ERF061</fullName>
    </recommendedName>
</protein>
<sequence length="335" mass="36564">MEESNDIFQNNFSPKISEIRASLSQIILAGGPNTLDSIFSLLTPSSVESATTSFNTHNPPPPPQLGSSVYLRQRDIIEKFHLQNRAISTPHPPLFSSTYDHHQTSELMLQAAAGSPAAAFAAALAAGRVTKKKKLYRGVRQRHWGKWVAEIRLPQNRMRVWLGTYDTAEAAAYAYDRAAYKLRGEYARLNFPNLKDPSELLGLGDSSKLIALKNAVDGKIQSICQRVRKERAKKSVKVSKNSSATADSSCLSSPEILSSSPVTTTTTAVTSEDSYWVSPMGLCNSENSSPVSVSVPSEVPATAEEEAMMGVDTDGFLLARMPSFDPELIWEVLAN</sequence>
<accession>Q9C7W2</accession>
<reference key="1">
    <citation type="submission" date="2004-02" db="EMBL/GenBank/DDBJ databases">
        <title>Molecular cloning, expression, phylogenetic and functional characterization of the Arabidopsis AP2/EREBP transcription factor family.</title>
        <authorList>
            <person name="Pan Y."/>
            <person name="Gong W."/>
            <person name="Liu D."/>
            <person name="Fu Q."/>
            <person name="Mei W.-Q."/>
            <person name="Song W.-Q."/>
            <person name="Ma L.-G."/>
            <person name="Luo J.-C."/>
            <person name="Deng X.-W."/>
            <person name="Zhu Y.-X."/>
        </authorList>
    </citation>
    <scope>NUCLEOTIDE SEQUENCE [MRNA]</scope>
</reference>
<reference key="2">
    <citation type="journal article" date="2000" name="Nature">
        <title>Sequence and analysis of chromosome 1 of the plant Arabidopsis thaliana.</title>
        <authorList>
            <person name="Theologis A."/>
            <person name="Ecker J.R."/>
            <person name="Palm C.J."/>
            <person name="Federspiel N.A."/>
            <person name="Kaul S."/>
            <person name="White O."/>
            <person name="Alonso J."/>
            <person name="Altafi H."/>
            <person name="Araujo R."/>
            <person name="Bowman C.L."/>
            <person name="Brooks S.Y."/>
            <person name="Buehler E."/>
            <person name="Chan A."/>
            <person name="Chao Q."/>
            <person name="Chen H."/>
            <person name="Cheuk R.F."/>
            <person name="Chin C.W."/>
            <person name="Chung M.K."/>
            <person name="Conn L."/>
            <person name="Conway A.B."/>
            <person name="Conway A.R."/>
            <person name="Creasy T.H."/>
            <person name="Dewar K."/>
            <person name="Dunn P."/>
            <person name="Etgu P."/>
            <person name="Feldblyum T.V."/>
            <person name="Feng J.-D."/>
            <person name="Fong B."/>
            <person name="Fujii C.Y."/>
            <person name="Gill J.E."/>
            <person name="Goldsmith A.D."/>
            <person name="Haas B."/>
            <person name="Hansen N.F."/>
            <person name="Hughes B."/>
            <person name="Huizar L."/>
            <person name="Hunter J.L."/>
            <person name="Jenkins J."/>
            <person name="Johnson-Hopson C."/>
            <person name="Khan S."/>
            <person name="Khaykin E."/>
            <person name="Kim C.J."/>
            <person name="Koo H.L."/>
            <person name="Kremenetskaia I."/>
            <person name="Kurtz D.B."/>
            <person name="Kwan A."/>
            <person name="Lam B."/>
            <person name="Langin-Hooper S."/>
            <person name="Lee A."/>
            <person name="Lee J.M."/>
            <person name="Lenz C.A."/>
            <person name="Li J.H."/>
            <person name="Li Y.-P."/>
            <person name="Lin X."/>
            <person name="Liu S.X."/>
            <person name="Liu Z.A."/>
            <person name="Luros J.S."/>
            <person name="Maiti R."/>
            <person name="Marziali A."/>
            <person name="Militscher J."/>
            <person name="Miranda M."/>
            <person name="Nguyen M."/>
            <person name="Nierman W.C."/>
            <person name="Osborne B.I."/>
            <person name="Pai G."/>
            <person name="Peterson J."/>
            <person name="Pham P.K."/>
            <person name="Rizzo M."/>
            <person name="Rooney T."/>
            <person name="Rowley D."/>
            <person name="Sakano H."/>
            <person name="Salzberg S.L."/>
            <person name="Schwartz J.R."/>
            <person name="Shinn P."/>
            <person name="Southwick A.M."/>
            <person name="Sun H."/>
            <person name="Tallon L.J."/>
            <person name="Tambunga G."/>
            <person name="Toriumi M.J."/>
            <person name="Town C.D."/>
            <person name="Utterback T."/>
            <person name="Van Aken S."/>
            <person name="Vaysberg M."/>
            <person name="Vysotskaia V.S."/>
            <person name="Walker M."/>
            <person name="Wu D."/>
            <person name="Yu G."/>
            <person name="Fraser C.M."/>
            <person name="Venter J.C."/>
            <person name="Davis R.W."/>
        </authorList>
    </citation>
    <scope>NUCLEOTIDE SEQUENCE [LARGE SCALE GENOMIC DNA]</scope>
    <source>
        <strain>cv. Columbia</strain>
    </source>
</reference>
<reference key="3">
    <citation type="journal article" date="2017" name="Plant J.">
        <title>Araport11: a complete reannotation of the Arabidopsis thaliana reference genome.</title>
        <authorList>
            <person name="Cheng C.Y."/>
            <person name="Krishnakumar V."/>
            <person name="Chan A.P."/>
            <person name="Thibaud-Nissen F."/>
            <person name="Schobel S."/>
            <person name="Town C.D."/>
        </authorList>
    </citation>
    <scope>GENOME REANNOTATION</scope>
    <source>
        <strain>cv. Columbia</strain>
    </source>
</reference>
<reference key="4">
    <citation type="submission" date="2006-07" db="EMBL/GenBank/DDBJ databases">
        <title>Large-scale analysis of RIKEN Arabidopsis full-length (RAFL) cDNAs.</title>
        <authorList>
            <person name="Totoki Y."/>
            <person name="Seki M."/>
            <person name="Ishida J."/>
            <person name="Nakajima M."/>
            <person name="Enju A."/>
            <person name="Kamiya A."/>
            <person name="Narusaka M."/>
            <person name="Shin-i T."/>
            <person name="Nakagawa M."/>
            <person name="Sakamoto N."/>
            <person name="Oishi K."/>
            <person name="Kohara Y."/>
            <person name="Kobayashi M."/>
            <person name="Toyoda A."/>
            <person name="Sakaki Y."/>
            <person name="Sakurai T."/>
            <person name="Iida K."/>
            <person name="Akiyama K."/>
            <person name="Satou M."/>
            <person name="Toyoda T."/>
            <person name="Konagaya A."/>
            <person name="Carninci P."/>
            <person name="Kawai J."/>
            <person name="Hayashizaki Y."/>
            <person name="Shinozaki K."/>
        </authorList>
    </citation>
    <scope>NUCLEOTIDE SEQUENCE [LARGE SCALE MRNA]</scope>
    <source>
        <strain>cv. Columbia</strain>
    </source>
</reference>
<reference key="5">
    <citation type="journal article" date="2006" name="Plant Physiol.">
        <title>Genome-wide analysis of the ERF gene family in Arabidopsis and rice.</title>
        <authorList>
            <person name="Nakano T."/>
            <person name="Suzuki K."/>
            <person name="Fujimura T."/>
            <person name="Shinshi H."/>
        </authorList>
    </citation>
    <scope>GENE FAMILY</scope>
    <scope>NOMENCLATURE</scope>
</reference>
<name>ERF61_ARATH</name>
<dbReference type="EMBL" id="AY560876">
    <property type="protein sequence ID" value="AAT44943.1"/>
    <property type="molecule type" value="mRNA"/>
</dbReference>
<dbReference type="EMBL" id="AC066689">
    <property type="protein sequence ID" value="AAG51704.1"/>
    <property type="molecule type" value="Genomic_DNA"/>
</dbReference>
<dbReference type="EMBL" id="CP002684">
    <property type="protein sequence ID" value="AEE34234.1"/>
    <property type="molecule type" value="Genomic_DNA"/>
</dbReference>
<dbReference type="EMBL" id="AK228763">
    <property type="protein sequence ID" value="BAF00663.1"/>
    <property type="molecule type" value="mRNA"/>
</dbReference>
<dbReference type="PIR" id="H96667">
    <property type="entry name" value="H96667"/>
</dbReference>
<dbReference type="RefSeq" id="NP_176620.1">
    <property type="nucleotide sequence ID" value="NM_105113.4"/>
</dbReference>
<dbReference type="SMR" id="Q9C7W2"/>
<dbReference type="FunCoup" id="Q9C7W2">
    <property type="interactions" value="27"/>
</dbReference>
<dbReference type="IntAct" id="Q9C7W2">
    <property type="interactions" value="1"/>
</dbReference>
<dbReference type="STRING" id="3702.Q9C7W2"/>
<dbReference type="PaxDb" id="3702-AT1G64380.1"/>
<dbReference type="EnsemblPlants" id="AT1G64380.1">
    <property type="protein sequence ID" value="AT1G64380.1"/>
    <property type="gene ID" value="AT1G64380"/>
</dbReference>
<dbReference type="GeneID" id="842745"/>
<dbReference type="Gramene" id="AT1G64380.1">
    <property type="protein sequence ID" value="AT1G64380.1"/>
    <property type="gene ID" value="AT1G64380"/>
</dbReference>
<dbReference type="KEGG" id="ath:AT1G64380"/>
<dbReference type="Araport" id="AT1G64380"/>
<dbReference type="TAIR" id="AT1G64380"/>
<dbReference type="eggNOG" id="ENOG502S50M">
    <property type="taxonomic scope" value="Eukaryota"/>
</dbReference>
<dbReference type="HOGENOM" id="CLU_057028_2_0_1"/>
<dbReference type="InParanoid" id="Q9C7W2"/>
<dbReference type="OMA" id="KFCHENK"/>
<dbReference type="PhylomeDB" id="Q9C7W2"/>
<dbReference type="PRO" id="PR:Q9C7W2"/>
<dbReference type="Proteomes" id="UP000006548">
    <property type="component" value="Chromosome 1"/>
</dbReference>
<dbReference type="ExpressionAtlas" id="Q9C7W2">
    <property type="expression patterns" value="baseline and differential"/>
</dbReference>
<dbReference type="GO" id="GO:0005634">
    <property type="term" value="C:nucleus"/>
    <property type="evidence" value="ECO:0007669"/>
    <property type="project" value="UniProtKB-SubCell"/>
</dbReference>
<dbReference type="GO" id="GO:0003700">
    <property type="term" value="F:DNA-binding transcription factor activity"/>
    <property type="evidence" value="ECO:0000250"/>
    <property type="project" value="TAIR"/>
</dbReference>
<dbReference type="GO" id="GO:0000976">
    <property type="term" value="F:transcription cis-regulatory region binding"/>
    <property type="evidence" value="ECO:0007669"/>
    <property type="project" value="UniProtKB-ARBA"/>
</dbReference>
<dbReference type="GO" id="GO:0009873">
    <property type="term" value="P:ethylene-activated signaling pathway"/>
    <property type="evidence" value="ECO:0007669"/>
    <property type="project" value="UniProtKB-KW"/>
</dbReference>
<dbReference type="CDD" id="cd00018">
    <property type="entry name" value="AP2"/>
    <property type="match status" value="1"/>
</dbReference>
<dbReference type="FunFam" id="3.30.730.10:FF:000001">
    <property type="entry name" value="Ethylene-responsive transcription factor 2"/>
    <property type="match status" value="1"/>
</dbReference>
<dbReference type="Gene3D" id="3.30.730.10">
    <property type="entry name" value="AP2/ERF domain"/>
    <property type="match status" value="1"/>
</dbReference>
<dbReference type="InterPro" id="IPR001471">
    <property type="entry name" value="AP2/ERF_dom"/>
</dbReference>
<dbReference type="InterPro" id="IPR036955">
    <property type="entry name" value="AP2/ERF_dom_sf"/>
</dbReference>
<dbReference type="InterPro" id="IPR016177">
    <property type="entry name" value="DNA-bd_dom_sf"/>
</dbReference>
<dbReference type="InterPro" id="IPR051758">
    <property type="entry name" value="ERF/AP2-like"/>
</dbReference>
<dbReference type="PANTHER" id="PTHR31657">
    <property type="entry name" value="ETHYLENE-RESPONSIVE TRANSCRIPTION FACTOR ERF061"/>
    <property type="match status" value="1"/>
</dbReference>
<dbReference type="PANTHER" id="PTHR31657:SF20">
    <property type="entry name" value="ETHYLENE-RESPONSIVE TRANSCRIPTION FACTOR ERF061"/>
    <property type="match status" value="1"/>
</dbReference>
<dbReference type="Pfam" id="PF00847">
    <property type="entry name" value="AP2"/>
    <property type="match status" value="1"/>
</dbReference>
<dbReference type="PRINTS" id="PR00367">
    <property type="entry name" value="ETHRSPELEMNT"/>
</dbReference>
<dbReference type="SMART" id="SM00380">
    <property type="entry name" value="AP2"/>
    <property type="match status" value="1"/>
</dbReference>
<dbReference type="SUPFAM" id="SSF54171">
    <property type="entry name" value="DNA-binding domain"/>
    <property type="match status" value="1"/>
</dbReference>
<dbReference type="PROSITE" id="PS51032">
    <property type="entry name" value="AP2_ERF"/>
    <property type="match status" value="1"/>
</dbReference>
<keyword id="KW-0010">Activator</keyword>
<keyword id="KW-0238">DNA-binding</keyword>
<keyword id="KW-0936">Ethylene signaling pathway</keyword>
<keyword id="KW-0539">Nucleus</keyword>
<keyword id="KW-1185">Reference proteome</keyword>
<keyword id="KW-0804">Transcription</keyword>
<keyword id="KW-0805">Transcription regulation</keyword>
<organism>
    <name type="scientific">Arabidopsis thaliana</name>
    <name type="common">Mouse-ear cress</name>
    <dbReference type="NCBI Taxonomy" id="3702"/>
    <lineage>
        <taxon>Eukaryota</taxon>
        <taxon>Viridiplantae</taxon>
        <taxon>Streptophyta</taxon>
        <taxon>Embryophyta</taxon>
        <taxon>Tracheophyta</taxon>
        <taxon>Spermatophyta</taxon>
        <taxon>Magnoliopsida</taxon>
        <taxon>eudicotyledons</taxon>
        <taxon>Gunneridae</taxon>
        <taxon>Pentapetalae</taxon>
        <taxon>rosids</taxon>
        <taxon>malvids</taxon>
        <taxon>Brassicales</taxon>
        <taxon>Brassicaceae</taxon>
        <taxon>Camelineae</taxon>
        <taxon>Arabidopsis</taxon>
    </lineage>
</organism>
<evidence type="ECO:0000250" key="1"/>
<evidence type="ECO:0000255" key="2">
    <source>
        <dbReference type="PROSITE-ProRule" id="PRU00366"/>
    </source>
</evidence>
<evidence type="ECO:0000256" key="3">
    <source>
        <dbReference type="SAM" id="MobiDB-lite"/>
    </source>
</evidence>
<evidence type="ECO:0000305" key="4"/>
<proteinExistence type="evidence at transcript level"/>